<dbReference type="EC" id="2.1.2.9" evidence="1"/>
<dbReference type="EMBL" id="CP000653">
    <property type="protein sequence ID" value="ABP62376.1"/>
    <property type="molecule type" value="Genomic_DNA"/>
</dbReference>
<dbReference type="RefSeq" id="WP_015960697.1">
    <property type="nucleotide sequence ID" value="NC_009436.1"/>
</dbReference>
<dbReference type="SMR" id="A4WF96"/>
<dbReference type="STRING" id="399742.Ent638_3719"/>
<dbReference type="KEGG" id="ent:Ent638_3719"/>
<dbReference type="eggNOG" id="COG0223">
    <property type="taxonomic scope" value="Bacteria"/>
</dbReference>
<dbReference type="HOGENOM" id="CLU_033347_1_2_6"/>
<dbReference type="OrthoDB" id="9802815at2"/>
<dbReference type="Proteomes" id="UP000000230">
    <property type="component" value="Chromosome"/>
</dbReference>
<dbReference type="GO" id="GO:0005829">
    <property type="term" value="C:cytosol"/>
    <property type="evidence" value="ECO:0007669"/>
    <property type="project" value="TreeGrafter"/>
</dbReference>
<dbReference type="GO" id="GO:0004479">
    <property type="term" value="F:methionyl-tRNA formyltransferase activity"/>
    <property type="evidence" value="ECO:0007669"/>
    <property type="project" value="UniProtKB-UniRule"/>
</dbReference>
<dbReference type="CDD" id="cd08646">
    <property type="entry name" value="FMT_core_Met-tRNA-FMT_N"/>
    <property type="match status" value="1"/>
</dbReference>
<dbReference type="CDD" id="cd08704">
    <property type="entry name" value="Met_tRNA_FMT_C"/>
    <property type="match status" value="1"/>
</dbReference>
<dbReference type="FunFam" id="3.10.25.10:FF:000001">
    <property type="entry name" value="Methionyl-tRNA formyltransferase"/>
    <property type="match status" value="1"/>
</dbReference>
<dbReference type="FunFam" id="3.40.50.170:FF:000003">
    <property type="entry name" value="Methionyl-tRNA formyltransferase"/>
    <property type="match status" value="1"/>
</dbReference>
<dbReference type="Gene3D" id="3.10.25.10">
    <property type="entry name" value="Formyl transferase, C-terminal domain"/>
    <property type="match status" value="1"/>
</dbReference>
<dbReference type="Gene3D" id="3.40.50.170">
    <property type="entry name" value="Formyl transferase, N-terminal domain"/>
    <property type="match status" value="1"/>
</dbReference>
<dbReference type="HAMAP" id="MF_00182">
    <property type="entry name" value="Formyl_trans"/>
    <property type="match status" value="1"/>
</dbReference>
<dbReference type="InterPro" id="IPR005794">
    <property type="entry name" value="Fmt"/>
</dbReference>
<dbReference type="InterPro" id="IPR005793">
    <property type="entry name" value="Formyl_trans_C"/>
</dbReference>
<dbReference type="InterPro" id="IPR037022">
    <property type="entry name" value="Formyl_trans_C_sf"/>
</dbReference>
<dbReference type="InterPro" id="IPR002376">
    <property type="entry name" value="Formyl_transf_N"/>
</dbReference>
<dbReference type="InterPro" id="IPR036477">
    <property type="entry name" value="Formyl_transf_N_sf"/>
</dbReference>
<dbReference type="InterPro" id="IPR011034">
    <property type="entry name" value="Formyl_transferase-like_C_sf"/>
</dbReference>
<dbReference type="InterPro" id="IPR001555">
    <property type="entry name" value="GART_AS"/>
</dbReference>
<dbReference type="InterPro" id="IPR044135">
    <property type="entry name" value="Met-tRNA-FMT_C"/>
</dbReference>
<dbReference type="InterPro" id="IPR041711">
    <property type="entry name" value="Met-tRNA-FMT_N"/>
</dbReference>
<dbReference type="NCBIfam" id="TIGR00460">
    <property type="entry name" value="fmt"/>
    <property type="match status" value="1"/>
</dbReference>
<dbReference type="PANTHER" id="PTHR11138">
    <property type="entry name" value="METHIONYL-TRNA FORMYLTRANSFERASE"/>
    <property type="match status" value="1"/>
</dbReference>
<dbReference type="PANTHER" id="PTHR11138:SF5">
    <property type="entry name" value="METHIONYL-TRNA FORMYLTRANSFERASE, MITOCHONDRIAL"/>
    <property type="match status" value="1"/>
</dbReference>
<dbReference type="Pfam" id="PF02911">
    <property type="entry name" value="Formyl_trans_C"/>
    <property type="match status" value="1"/>
</dbReference>
<dbReference type="Pfam" id="PF00551">
    <property type="entry name" value="Formyl_trans_N"/>
    <property type="match status" value="1"/>
</dbReference>
<dbReference type="SUPFAM" id="SSF50486">
    <property type="entry name" value="FMT C-terminal domain-like"/>
    <property type="match status" value="1"/>
</dbReference>
<dbReference type="SUPFAM" id="SSF53328">
    <property type="entry name" value="Formyltransferase"/>
    <property type="match status" value="1"/>
</dbReference>
<dbReference type="PROSITE" id="PS00373">
    <property type="entry name" value="GART"/>
    <property type="match status" value="1"/>
</dbReference>
<keyword id="KW-0648">Protein biosynthesis</keyword>
<keyword id="KW-0808">Transferase</keyword>
<comment type="function">
    <text evidence="1">Attaches a formyl group to the free amino group of methionyl-tRNA(fMet). The formyl group appears to play a dual role in the initiator identity of N-formylmethionyl-tRNA by promoting its recognition by IF2 and preventing the misappropriation of this tRNA by the elongation apparatus.</text>
</comment>
<comment type="catalytic activity">
    <reaction evidence="1">
        <text>L-methionyl-tRNA(fMet) + (6R)-10-formyltetrahydrofolate = N-formyl-L-methionyl-tRNA(fMet) + (6S)-5,6,7,8-tetrahydrofolate + H(+)</text>
        <dbReference type="Rhea" id="RHEA:24380"/>
        <dbReference type="Rhea" id="RHEA-COMP:9952"/>
        <dbReference type="Rhea" id="RHEA-COMP:9953"/>
        <dbReference type="ChEBI" id="CHEBI:15378"/>
        <dbReference type="ChEBI" id="CHEBI:57453"/>
        <dbReference type="ChEBI" id="CHEBI:78530"/>
        <dbReference type="ChEBI" id="CHEBI:78844"/>
        <dbReference type="ChEBI" id="CHEBI:195366"/>
        <dbReference type="EC" id="2.1.2.9"/>
    </reaction>
</comment>
<comment type="similarity">
    <text evidence="1">Belongs to the Fmt family.</text>
</comment>
<accession>A4WF96</accession>
<sequence length="315" mass="34528">MSKKLRIIFAGTPDFAARHLDALLSSGHQIVGVFTQPDRPAGRGKKLMPGPVKVLAEKHNLPVFQPVSLRPQENQQLVSDLNADVMVVVAYGLILPKAVLDMPRLGCINVHGSLLPRWRGAAPIQRSLWAGDSETGVTIMRMDVGLDTGDMLYKLACPITAEDTSATLYDKLADLGPQGLIETLQQLADGKAQPEVQDEAFVTYAEKLSKEEAQLDWSLSAAQLERCIRAFNPWPMSWMTIDEQPVKIWKASVINREAKAEPGTIIEATREGIQVATADGILNLESLQPAGKKAMSAQDLLNSRREWFTPGTRLA</sequence>
<feature type="chain" id="PRO_1000058402" description="Methionyl-tRNA formyltransferase">
    <location>
        <begin position="1"/>
        <end position="315"/>
    </location>
</feature>
<feature type="binding site" evidence="1">
    <location>
        <begin position="113"/>
        <end position="116"/>
    </location>
    <ligand>
        <name>(6S)-5,6,7,8-tetrahydrofolate</name>
        <dbReference type="ChEBI" id="CHEBI:57453"/>
    </ligand>
</feature>
<reference key="1">
    <citation type="journal article" date="2010" name="PLoS Genet.">
        <title>Genome sequence of the plant growth promoting endophytic bacterium Enterobacter sp. 638.</title>
        <authorList>
            <person name="Taghavi S."/>
            <person name="van der Lelie D."/>
            <person name="Hoffman A."/>
            <person name="Zhang Y.B."/>
            <person name="Walla M.D."/>
            <person name="Vangronsveld J."/>
            <person name="Newman L."/>
            <person name="Monchy S."/>
        </authorList>
    </citation>
    <scope>NUCLEOTIDE SEQUENCE [LARGE SCALE GENOMIC DNA]</scope>
    <source>
        <strain>638</strain>
    </source>
</reference>
<evidence type="ECO:0000255" key="1">
    <source>
        <dbReference type="HAMAP-Rule" id="MF_00182"/>
    </source>
</evidence>
<proteinExistence type="inferred from homology"/>
<organism>
    <name type="scientific">Enterobacter sp. (strain 638)</name>
    <dbReference type="NCBI Taxonomy" id="399742"/>
    <lineage>
        <taxon>Bacteria</taxon>
        <taxon>Pseudomonadati</taxon>
        <taxon>Pseudomonadota</taxon>
        <taxon>Gammaproteobacteria</taxon>
        <taxon>Enterobacterales</taxon>
        <taxon>Enterobacteriaceae</taxon>
        <taxon>Enterobacter</taxon>
    </lineage>
</organism>
<protein>
    <recommendedName>
        <fullName evidence="1">Methionyl-tRNA formyltransferase</fullName>
        <ecNumber evidence="1">2.1.2.9</ecNumber>
    </recommendedName>
</protein>
<gene>
    <name evidence="1" type="primary">fmt</name>
    <name type="ordered locus">Ent638_3719</name>
</gene>
<name>FMT_ENT38</name>